<dbReference type="EMBL" id="AF124847">
    <property type="protein sequence ID" value="AAD21082.1"/>
    <property type="molecule type" value="mRNA"/>
</dbReference>
<dbReference type="EMBL" id="AL670285">
    <property type="status" value="NOT_ANNOTATED_CDS"/>
    <property type="molecule type" value="Genomic_DNA"/>
</dbReference>
<dbReference type="EMBL" id="CH466615">
    <property type="protein sequence ID" value="EDL13372.1"/>
    <property type="molecule type" value="Genomic_DNA"/>
</dbReference>
<dbReference type="EMBL" id="BC019983">
    <property type="protein sequence ID" value="AAH19983.1"/>
    <property type="molecule type" value="mRNA"/>
</dbReference>
<dbReference type="CCDS" id="CCDS18872.1">
    <molecule id="Q9WUB6-1"/>
</dbReference>
<dbReference type="RefSeq" id="NP_062675.2">
    <molecule id="Q9WUB6-1"/>
    <property type="nucleotide sequence ID" value="NM_019701.2"/>
</dbReference>
<dbReference type="RefSeq" id="XP_011248609.1">
    <molecule id="Q9WUB6-1"/>
    <property type="nucleotide sequence ID" value="XM_011250307.3"/>
</dbReference>
<dbReference type="SMR" id="Q9WUB6"/>
<dbReference type="FunCoup" id="Q9WUB6">
    <property type="interactions" value="6"/>
</dbReference>
<dbReference type="STRING" id="10090.ENSMUSP00000006378"/>
<dbReference type="iPTMnet" id="Q9WUB6"/>
<dbReference type="PhosphoSitePlus" id="Q9WUB6"/>
<dbReference type="PaxDb" id="10090-ENSMUSP00000006378"/>
<dbReference type="ProteomicsDB" id="283572">
    <molecule id="Q9WUB6-1"/>
</dbReference>
<dbReference type="ProteomicsDB" id="283573">
    <molecule id="Q9WUB6-2"/>
</dbReference>
<dbReference type="DNASU" id="56365"/>
<dbReference type="Ensembl" id="ENSMUST00000006378.9">
    <molecule id="Q9WUB6-1"/>
    <property type="protein sequence ID" value="ENSMUSP00000006378.3"/>
    <property type="gene ID" value="ENSMUSG00000006216.11"/>
</dbReference>
<dbReference type="Ensembl" id="ENSMUST00000105788.2">
    <molecule id="Q9WUB6-2"/>
    <property type="protein sequence ID" value="ENSMUSP00000101414.2"/>
    <property type="gene ID" value="ENSMUSG00000006216.11"/>
</dbReference>
<dbReference type="GeneID" id="56365"/>
<dbReference type="KEGG" id="mmu:56365"/>
<dbReference type="UCSC" id="uc008voh.2">
    <molecule id="Q9WUB6-1"/>
    <property type="organism name" value="mouse"/>
</dbReference>
<dbReference type="UCSC" id="uc008voi.2">
    <molecule id="Q9WUB6-2"/>
    <property type="organism name" value="mouse"/>
</dbReference>
<dbReference type="AGR" id="MGI:1930643"/>
<dbReference type="CTD" id="1188"/>
<dbReference type="MGI" id="MGI:1930643">
    <property type="gene designation" value="Clcnkb"/>
</dbReference>
<dbReference type="VEuPathDB" id="HostDB:ENSMUSG00000006216"/>
<dbReference type="eggNOG" id="KOG0476">
    <property type="taxonomic scope" value="Eukaryota"/>
</dbReference>
<dbReference type="GeneTree" id="ENSGT00940000158748"/>
<dbReference type="HOGENOM" id="CLU_006904_4_0_1"/>
<dbReference type="InParanoid" id="Q9WUB6"/>
<dbReference type="OMA" id="MISCIVA"/>
<dbReference type="OrthoDB" id="4564at2759"/>
<dbReference type="PhylomeDB" id="Q9WUB6"/>
<dbReference type="TreeFam" id="TF300522"/>
<dbReference type="Reactome" id="R-MMU-2672351">
    <property type="pathway name" value="Stimuli-sensing channels"/>
</dbReference>
<dbReference type="BioGRID-ORCS" id="56365">
    <property type="hits" value="4 hits in 77 CRISPR screens"/>
</dbReference>
<dbReference type="ChiTaRS" id="Clcnkb">
    <property type="organism name" value="mouse"/>
</dbReference>
<dbReference type="PRO" id="PR:Q9WUB6"/>
<dbReference type="Proteomes" id="UP000000589">
    <property type="component" value="Chromosome 4"/>
</dbReference>
<dbReference type="RNAct" id="Q9WUB6">
    <property type="molecule type" value="protein"/>
</dbReference>
<dbReference type="Bgee" id="ENSMUSG00000006216">
    <property type="expression patterns" value="Expressed in right kidney and 42 other cell types or tissues"/>
</dbReference>
<dbReference type="ExpressionAtlas" id="Q9WUB6">
    <property type="expression patterns" value="baseline and differential"/>
</dbReference>
<dbReference type="GO" id="GO:0016323">
    <property type="term" value="C:basolateral plasma membrane"/>
    <property type="evidence" value="ECO:0007669"/>
    <property type="project" value="UniProtKB-SubCell"/>
</dbReference>
<dbReference type="GO" id="GO:0034707">
    <property type="term" value="C:chloride channel complex"/>
    <property type="evidence" value="ECO:0007669"/>
    <property type="project" value="UniProtKB-KW"/>
</dbReference>
<dbReference type="GO" id="GO:0005254">
    <property type="term" value="F:chloride channel activity"/>
    <property type="evidence" value="ECO:0000315"/>
    <property type="project" value="UniProtKB"/>
</dbReference>
<dbReference type="GO" id="GO:0046872">
    <property type="term" value="F:metal ion binding"/>
    <property type="evidence" value="ECO:0007669"/>
    <property type="project" value="UniProtKB-KW"/>
</dbReference>
<dbReference type="GO" id="GO:0005247">
    <property type="term" value="F:voltage-gated chloride channel activity"/>
    <property type="evidence" value="ECO:0007669"/>
    <property type="project" value="InterPro"/>
</dbReference>
<dbReference type="GO" id="GO:0051453">
    <property type="term" value="P:regulation of intracellular pH"/>
    <property type="evidence" value="ECO:0000315"/>
    <property type="project" value="UniProtKB"/>
</dbReference>
<dbReference type="GO" id="GO:0070293">
    <property type="term" value="P:renal absorption"/>
    <property type="evidence" value="ECO:0000315"/>
    <property type="project" value="UniProtKB"/>
</dbReference>
<dbReference type="GO" id="GO:0030321">
    <property type="term" value="P:transepithelial chloride transport"/>
    <property type="evidence" value="ECO:0000315"/>
    <property type="project" value="UniProtKB"/>
</dbReference>
<dbReference type="CDD" id="cd04591">
    <property type="entry name" value="CBS_pair_voltage-gated_CLC_euk_bac"/>
    <property type="match status" value="1"/>
</dbReference>
<dbReference type="CDD" id="cd03683">
    <property type="entry name" value="ClC_1_like"/>
    <property type="match status" value="1"/>
</dbReference>
<dbReference type="FunFam" id="1.10.3080.10:FF:000012">
    <property type="entry name" value="Chloride channel K"/>
    <property type="match status" value="1"/>
</dbReference>
<dbReference type="FunFam" id="3.10.580.10:FF:000028">
    <property type="entry name" value="Chloride channel protein"/>
    <property type="match status" value="1"/>
</dbReference>
<dbReference type="Gene3D" id="3.10.580.10">
    <property type="entry name" value="CBS-domain"/>
    <property type="match status" value="1"/>
</dbReference>
<dbReference type="Gene3D" id="1.10.3080.10">
    <property type="entry name" value="Clc chloride channel"/>
    <property type="match status" value="1"/>
</dbReference>
<dbReference type="InterPro" id="IPR000644">
    <property type="entry name" value="CBS_dom"/>
</dbReference>
<dbReference type="InterPro" id="IPR046342">
    <property type="entry name" value="CBS_dom_sf"/>
</dbReference>
<dbReference type="InterPro" id="IPR014743">
    <property type="entry name" value="Cl-channel_core"/>
</dbReference>
<dbReference type="InterPro" id="IPR002250">
    <property type="entry name" value="Cl_channel-K"/>
</dbReference>
<dbReference type="InterPro" id="IPR050970">
    <property type="entry name" value="Cl_channel_volt-gated"/>
</dbReference>
<dbReference type="InterPro" id="IPR001807">
    <property type="entry name" value="ClC"/>
</dbReference>
<dbReference type="PANTHER" id="PTHR45720">
    <property type="entry name" value="CHLORIDE CHANNEL PROTEIN 2"/>
    <property type="match status" value="1"/>
</dbReference>
<dbReference type="PANTHER" id="PTHR45720:SF2">
    <property type="entry name" value="CHLORIDE CHANNEL PROTEIN CLC-KB"/>
    <property type="match status" value="1"/>
</dbReference>
<dbReference type="Pfam" id="PF00571">
    <property type="entry name" value="CBS"/>
    <property type="match status" value="1"/>
</dbReference>
<dbReference type="Pfam" id="PF00654">
    <property type="entry name" value="Voltage_CLC"/>
    <property type="match status" value="1"/>
</dbReference>
<dbReference type="PRINTS" id="PR00762">
    <property type="entry name" value="CLCHANNEL"/>
</dbReference>
<dbReference type="PRINTS" id="PR01119">
    <property type="entry name" value="CLCHANNELKDY"/>
</dbReference>
<dbReference type="SUPFAM" id="SSF54631">
    <property type="entry name" value="CBS-domain pair"/>
    <property type="match status" value="1"/>
</dbReference>
<dbReference type="SUPFAM" id="SSF81340">
    <property type="entry name" value="Clc chloride channel"/>
    <property type="match status" value="1"/>
</dbReference>
<dbReference type="PROSITE" id="PS51371">
    <property type="entry name" value="CBS"/>
    <property type="match status" value="2"/>
</dbReference>
<proteinExistence type="evidence at protein level"/>
<feature type="chain" id="PRO_0000094460" description="Chloride channel protein ClC-Kb">
    <location>
        <begin position="1"/>
        <end position="687"/>
    </location>
</feature>
<feature type="topological domain" description="Cytoplasmic" evidence="2">
    <location>
        <begin position="1"/>
        <end position="50"/>
    </location>
</feature>
<feature type="transmembrane region" description="Helical" evidence="2">
    <location>
        <begin position="51"/>
        <end position="82"/>
    </location>
</feature>
<feature type="transmembrane region" description="Helical" evidence="2">
    <location>
        <begin position="91"/>
        <end position="111"/>
    </location>
</feature>
<feature type="intramembrane region" description="Helical" evidence="2">
    <location>
        <begin position="116"/>
        <end position="127"/>
    </location>
</feature>
<feature type="transmembrane region" description="Helical" evidence="2">
    <location>
        <begin position="141"/>
        <end position="160"/>
    </location>
</feature>
<feature type="transmembrane region" description="Helical" evidence="2">
    <location>
        <begin position="161"/>
        <end position="180"/>
    </location>
</feature>
<feature type="intramembrane region" description="Helical" evidence="2">
    <location>
        <begin position="203"/>
        <end position="224"/>
    </location>
</feature>
<feature type="transmembrane region" description="Helical" evidence="2">
    <location>
        <begin position="236"/>
        <end position="255"/>
    </location>
</feature>
<feature type="transmembrane region" description="Helical" evidence="2">
    <location>
        <begin position="282"/>
        <end position="310"/>
    </location>
</feature>
<feature type="transmembrane region" description="Helical" evidence="2">
    <location>
        <begin position="325"/>
        <end position="342"/>
    </location>
</feature>
<feature type="intramembrane region" description="Helical" evidence="2">
    <location>
        <begin position="349"/>
        <end position="360"/>
    </location>
</feature>
<feature type="transmembrane region" description="Helical" evidence="2">
    <location>
        <begin position="400"/>
        <end position="420"/>
    </location>
</feature>
<feature type="transmembrane region" description="Helical" evidence="2">
    <location>
        <begin position="421"/>
        <end position="440"/>
    </location>
</feature>
<feature type="intramembrane region" description="Helical" evidence="2">
    <location>
        <begin position="464"/>
        <end position="496"/>
    </location>
</feature>
<feature type="transmembrane region" description="Helical" evidence="2">
    <location>
        <begin position="500"/>
        <end position="520"/>
    </location>
</feature>
<feature type="topological domain" description="Cytoplasmic" evidence="2">
    <location>
        <begin position="521"/>
        <end position="687"/>
    </location>
</feature>
<feature type="domain" description="CBS 1" evidence="7">
    <location>
        <begin position="551"/>
        <end position="609"/>
    </location>
</feature>
<feature type="domain" description="CBS 2" evidence="7">
    <location>
        <begin position="626"/>
        <end position="687"/>
    </location>
</feature>
<feature type="binding site" evidence="3">
    <location>
        <position position="121"/>
    </location>
    <ligand>
        <name>chloride</name>
        <dbReference type="ChEBI" id="CHEBI:17996"/>
    </ligand>
</feature>
<feature type="binding site" evidence="1">
    <location>
        <position position="259"/>
    </location>
    <ligand>
        <name>Ca(2+)</name>
        <dbReference type="ChEBI" id="CHEBI:29108"/>
    </ligand>
</feature>
<feature type="binding site" evidence="1">
    <location>
        <position position="261"/>
    </location>
    <ligand>
        <name>Ca(2+)</name>
        <dbReference type="ChEBI" id="CHEBI:29108"/>
    </ligand>
</feature>
<feature type="binding site" evidence="1">
    <location>
        <position position="278"/>
    </location>
    <ligand>
        <name>Ca(2+)</name>
        <dbReference type="ChEBI" id="CHEBI:29108"/>
    </ligand>
</feature>
<feature type="binding site" evidence="1">
    <location>
        <position position="281"/>
    </location>
    <ligand>
        <name>Ca(2+)</name>
        <dbReference type="ChEBI" id="CHEBI:29108"/>
    </ligand>
</feature>
<feature type="binding site" evidence="3">
    <location>
        <position position="426"/>
    </location>
    <ligand>
        <name>chloride</name>
        <dbReference type="ChEBI" id="CHEBI:17996"/>
    </ligand>
</feature>
<feature type="splice variant" id="VSP_011757" description="In isoform 2." evidence="13">
    <original>LKKA</original>
    <variation>VLGS</variation>
    <location>
        <begin position="673"/>
        <end position="676"/>
    </location>
</feature>
<feature type="splice variant" id="VSP_011758" description="In isoform 2." evidence="13">
    <location>
        <begin position="677"/>
        <end position="687"/>
    </location>
</feature>
<feature type="sequence conflict" description="In Ref. 1; AAD21082 and 4; AAH19983." evidence="15" ref="1 4">
    <original>R</original>
    <variation>L</variation>
    <location>
        <position position="92"/>
    </location>
</feature>
<feature type="sequence conflict" description="In Ref. 1; AAD21082 and 4; AAH19983." evidence="15" ref="1 4">
    <original>I</original>
    <variation>V</variation>
    <location>
        <position position="431"/>
    </location>
</feature>
<feature type="sequence conflict" description="In Ref. 1; AAD21082 and 4; AAH19983." evidence="15" ref="1 4">
    <original>A</original>
    <variation>T</variation>
    <location>
        <position position="554"/>
    </location>
</feature>
<feature type="sequence conflict" description="In Ref. 1; AAD21082 and 4; AAH19983." evidence="15" ref="1 4">
    <original>V</original>
    <variation>M</variation>
    <location>
        <position position="571"/>
    </location>
</feature>
<feature type="sequence conflict" description="In Ref. 4; AAH19983." evidence="15" ref="4">
    <original>C</original>
    <variation>Y</variation>
    <location>
        <position position="617"/>
    </location>
</feature>
<feature type="sequence conflict" description="In Ref. 1; AAD21082 and 4; AAH19983." evidence="15" ref="1 4">
    <original>L</original>
    <variation>P</variation>
    <location>
        <position position="637"/>
    </location>
</feature>
<feature type="sequence conflict" description="In Ref. 1; AAD21082 and 4; AAH19983." evidence="15" ref="1 4">
    <original>S</original>
    <variation>F</variation>
    <location>
        <position position="667"/>
    </location>
</feature>
<sequence>MEELVGLREGASKKPVPLQELWGPCPRIRRNIQGGLEWLKERLFRVGEDWYFLVALGVLMALISYAMNFTIGRVVRAHKWLYREIGDGHLLRYLSWTVYPVALLSFSSGFSQSITPSSGGSGIPEVKTILTGVVLEDYLDIKNFGAKVVGLSCTLATGSTIFLGKLGPFVHLSVMIAAYLGRVRTKTVGEPESKTKEMELLAAGAAVGVATVFAAPISGVLFSIEVMSSHFSVWDYWRGFFAATCGAFMFHLLAVFNNEQETITSIYKTSFPVDIPFDLPEIFFFVALGAICGILSCGYNYSQRTFLFFLKANGFTSKLLATSKPLYSALAAVVLASITYPPGVGHFMASRLSMSEHLETLFDNNSWALMTKNSSPPWAAEPDPQKLWLEWCHPQLTVFGTLVFFLVMKFWMLILATTIPIPAGYFLPIFIYGAVIGRLFGEVLSVAFPEGIVAGGRVNPIMPGAYALAGAAAFSGAVTHTLSTALLAFEVTGQLVHALPVLMAVLAANAISQSFQPSFYDGTIIVKKLPYLPWIRGRQIGSHSVTVGHFMNCALTTLAKDMPLEQVIQVVISTDVTQYPLVETTESQTLVGVVKRTHLVQALQTEPASWAPGQQPCLQDILANGCPTQPVTLQLSLETSLHETHNLFELLNLQTLFVTSRGRAVGSVSWVELKKAISTLTNPPAPK</sequence>
<reference key="1">
    <citation type="journal article" date="2000" name="J. Membr. Biol.">
        <title>Cl(-) channels in basolateral TAL membranes XV. Molecular heterogeneity between cortical and medullary channels.</title>
        <authorList>
            <person name="Winters C.J."/>
            <person name="Zimniak L."/>
            <person name="Mikhailova M.V."/>
            <person name="Reeves W.B."/>
            <person name="Andreoli T.E."/>
        </authorList>
    </citation>
    <scope>NUCLEOTIDE SEQUENCE [MRNA] (ISOFORM 1)</scope>
    <scope>POSSIBLE FUNCTION</scope>
    <scope>TISSUE SPECIFICITY</scope>
    <source>
        <tissue>Kidney outer medulla</tissue>
    </source>
</reference>
<reference key="2">
    <citation type="journal article" date="2009" name="PLoS Biol.">
        <title>Lineage-specific biology revealed by a finished genome assembly of the mouse.</title>
        <authorList>
            <person name="Church D.M."/>
            <person name="Goodstadt L."/>
            <person name="Hillier L.W."/>
            <person name="Zody M.C."/>
            <person name="Goldstein S."/>
            <person name="She X."/>
            <person name="Bult C.J."/>
            <person name="Agarwala R."/>
            <person name="Cherry J.L."/>
            <person name="DiCuccio M."/>
            <person name="Hlavina W."/>
            <person name="Kapustin Y."/>
            <person name="Meric P."/>
            <person name="Maglott D."/>
            <person name="Birtle Z."/>
            <person name="Marques A.C."/>
            <person name="Graves T."/>
            <person name="Zhou S."/>
            <person name="Teague B."/>
            <person name="Potamousis K."/>
            <person name="Churas C."/>
            <person name="Place M."/>
            <person name="Herschleb J."/>
            <person name="Runnheim R."/>
            <person name="Forrest D."/>
            <person name="Amos-Landgraf J."/>
            <person name="Schwartz D.C."/>
            <person name="Cheng Z."/>
            <person name="Lindblad-Toh K."/>
            <person name="Eichler E.E."/>
            <person name="Ponting C.P."/>
        </authorList>
    </citation>
    <scope>NUCLEOTIDE SEQUENCE [LARGE SCALE GENOMIC DNA]</scope>
    <source>
        <strain>C57BL/6J</strain>
    </source>
</reference>
<reference key="3">
    <citation type="submission" date="2005-07" db="EMBL/GenBank/DDBJ databases">
        <authorList>
            <person name="Mural R.J."/>
            <person name="Adams M.D."/>
            <person name="Myers E.W."/>
            <person name="Smith H.O."/>
            <person name="Venter J.C."/>
        </authorList>
    </citation>
    <scope>NUCLEOTIDE SEQUENCE [LARGE SCALE GENOMIC DNA]</scope>
</reference>
<reference key="4">
    <citation type="journal article" date="2004" name="Genome Res.">
        <title>The status, quality, and expansion of the NIH full-length cDNA project: the Mammalian Gene Collection (MGC).</title>
        <authorList>
            <consortium name="The MGC Project Team"/>
        </authorList>
    </citation>
    <scope>NUCLEOTIDE SEQUENCE [LARGE SCALE MRNA] (ISOFORM 2)</scope>
    <source>
        <strain>FVB/N</strain>
        <tissue>Salivary gland</tissue>
    </source>
</reference>
<reference key="5">
    <citation type="journal article" date="2001" name="Nature">
        <title>Barttin is a Cl- channel beta-subunit crucial for renal Cl-reabsorption and inner ear K+ secretion.</title>
        <authorList>
            <person name="Estevez R."/>
            <person name="Boettger T."/>
            <person name="Stein V."/>
            <person name="Birkenhaeger R."/>
            <person name="Otto E."/>
            <person name="Hildebrandt F."/>
            <person name="Jentsch T.J."/>
        </authorList>
    </citation>
    <scope>SUBCELLULAR LOCATION</scope>
    <scope>TISSUE SPECIFICITY</scope>
</reference>
<reference key="6">
    <citation type="journal article" date="2010" name="Cell">
        <title>A tissue-specific atlas of mouse protein phosphorylation and expression.</title>
        <authorList>
            <person name="Huttlin E.L."/>
            <person name="Jedrychowski M.P."/>
            <person name="Elias J.E."/>
            <person name="Goswami T."/>
            <person name="Rad R."/>
            <person name="Beausoleil S.A."/>
            <person name="Villen J."/>
            <person name="Haas W."/>
            <person name="Sowa M.E."/>
            <person name="Gygi S.P."/>
        </authorList>
    </citation>
    <scope>IDENTIFICATION BY MASS SPECTROMETRY [LARGE SCALE ANALYSIS]</scope>
    <source>
        <tissue>Kidney</tissue>
    </source>
</reference>
<reference key="7">
    <citation type="journal article" date="2017" name="J. Am. Soc. Nephrol.">
        <title>The ClC-K2 Chloride Channel Is Critical for Salt Handling in the Distal Nephron.</title>
        <authorList>
            <person name="Hennings J.C."/>
            <person name="Andrini O."/>
            <person name="Picard N."/>
            <person name="Paulais M."/>
            <person name="Huebner A.K."/>
            <person name="Cayuqueo I.K."/>
            <person name="Bignon Y."/>
            <person name="Keck M."/>
            <person name="Corniere N."/>
            <person name="Boehm D."/>
            <person name="Jentsch T.J."/>
            <person name="Chambrey R."/>
            <person name="Teulon J."/>
            <person name="Huebner C.A."/>
            <person name="Eladari D."/>
        </authorList>
    </citation>
    <scope>FUNCTION</scope>
    <scope>TRANSPORTER ACTIVITY</scope>
    <scope>DISRUPTION PHENOTYPE</scope>
    <scope>TISSUE SPECIFICITY</scope>
    <scope>SUBCELLULAR LOCATION</scope>
</reference>
<reference key="8">
    <citation type="journal article" date="2021" name="JCI Insight">
        <title>Impairment in renal medulla development underlies salt wasting in Clc-k2 channel deficiency.</title>
        <authorList>
            <person name="Lin M.H."/>
            <person name="Chen J.C."/>
            <person name="Tian X."/>
            <person name="Lee C.M."/>
            <person name="Yu I.S."/>
            <person name="Lo Y.F."/>
            <person name="Uchida S."/>
            <person name="Huang C.L."/>
            <person name="Chen B.C."/>
            <person name="Cheng C.J."/>
        </authorList>
    </citation>
    <scope>FUNCTION</scope>
    <scope>TISSUE SPECIFICITY</scope>
    <scope>DEVELOPMENTAL STAGE</scope>
</reference>
<reference key="9">
    <citation type="journal article" date="2022" name="FASEB J.">
        <title>ClC-K2 Cl- channel allows identification of A- and B-type of intercalated cells in split-opened collecting ducts.</title>
        <authorList>
            <person name="Pyrshev K."/>
            <person name="Khayyat N.H."/>
            <person name="Stavniichuk A."/>
            <person name="Tomilin V.N."/>
            <person name="Zaika O."/>
            <person name="Ramkumar N."/>
            <person name="Pochynyuk O."/>
        </authorList>
    </citation>
    <scope>FUNCTION</scope>
    <scope>TISSUE SPECIFICITY</scope>
</reference>
<accession>Q9WUB6</accession>
<accession>A2ADB6</accession>
<accession>Q8VCF8</accession>
<comment type="function">
    <text evidence="5 10 11 12">Anion-selective channel permeable to small monovalent anions with ion selectivity for chloride &gt; bromide &gt; nitrate &gt; iodide (By similarity). Forms a homodimeric channel where each subunit has its own ion conduction pathway. May conduct double-barreled currents controlled by two types of gates, two fast gates that control each subunit independently and a slow common gate that opens and shuts off both subunits simultaneously (By similarity). Assembles with the regulatory subunit BSND/Barttin for sorting at the basolateral plasma membrane domain and functional switch to the ion conducting state. CLCNKB:BSND channels display mostly a linear current-voltage relationship controlled by common gate (By similarity). Mediates chloride conductance along nephron segments, namely the thick ascending limb of Henle's loop, convoluted tubule and the collecting duct, contributing to the maintenance of systemic acid-base and electrolyte homeostasis (PubMed:27335120, PubMed:34499620, PubMed:35349181). Conducts chloride currents in the stria vascularis of the inner ear to establish the endocochlear potential necessary for normal hearing (By similarity).</text>
</comment>
<comment type="catalytic activity">
    <reaction evidence="10">
        <text>chloride(in) = chloride(out)</text>
        <dbReference type="Rhea" id="RHEA:29823"/>
        <dbReference type="ChEBI" id="CHEBI:17996"/>
    </reaction>
</comment>
<comment type="catalytic activity">
    <reaction evidence="5">
        <text>iodide(out) = iodide(in)</text>
        <dbReference type="Rhea" id="RHEA:66324"/>
        <dbReference type="ChEBI" id="CHEBI:16382"/>
    </reaction>
</comment>
<comment type="catalytic activity">
    <reaction evidence="5">
        <text>nitrate(in) = nitrate(out)</text>
        <dbReference type="Rhea" id="RHEA:34923"/>
        <dbReference type="ChEBI" id="CHEBI:17632"/>
    </reaction>
</comment>
<comment type="catalytic activity">
    <reaction evidence="5">
        <text>bromide(in) = bromide(out)</text>
        <dbReference type="Rhea" id="RHEA:75383"/>
        <dbReference type="ChEBI" id="CHEBI:15858"/>
    </reaction>
</comment>
<comment type="subunit">
    <text evidence="4 5">Homodimer (By similarity). Interacts with BSND (By similarity).</text>
</comment>
<comment type="subcellular location">
    <subcellularLocation>
        <location evidence="10 16">Basolateral cell membrane</location>
        <topology evidence="6">Multi-pass membrane protein</topology>
    </subcellularLocation>
</comment>
<comment type="alternative products">
    <event type="alternative splicing"/>
    <isoform>
        <id>Q9WUB6-1</id>
        <name>1</name>
        <sequence type="displayed"/>
    </isoform>
    <isoform>
        <id>Q9WUB6-2</id>
        <name>2</name>
        <sequence type="described" ref="VSP_011757 VSP_011758"/>
    </isoform>
</comment>
<comment type="tissue specificity">
    <text evidence="8 9 11 12">Specifically expressed in the kidney, predominantly in the outer medulla and cortex. All nephron segments expressing BSND also express CLCNK proteins.</text>
</comment>
<comment type="developmental stage">
    <text evidence="11">Expressed in embryonic kidneys, first detected at the nephrogenic zone at 15.5 dpc, then diffusely expressed in the renal cortex and medulla, including the loop of Henle at 18.5 dpc. Preferentially localizes to the renal cortex by P1.</text>
</comment>
<comment type="PTM">
    <text evidence="5">N-glycosylated.</text>
</comment>
<comment type="disruption phenotype">
    <text evidence="10">Mice are born at the expected Mendelian ratios. They develop hydronephrosis and polyuria associated with metabolic alkalosis resulting in early lethality.</text>
</comment>
<comment type="miscellaneous">
    <molecule>Isoform 2</molecule>
    <text evidence="15">Due to intron retention.</text>
</comment>
<comment type="similarity">
    <text evidence="15">Belongs to the chloride channel (TC 2.A.49) family. CLCNKB subfamily.</text>
</comment>
<protein>
    <recommendedName>
        <fullName>Chloride channel protein ClC-Kb</fullName>
        <shortName>Chloride channel Kb</shortName>
    </recommendedName>
    <alternativeName>
        <fullName evidence="14">ClC-K2</fullName>
    </alternativeName>
</protein>
<keyword id="KW-0025">Alternative splicing</keyword>
<keyword id="KW-0106">Calcium</keyword>
<keyword id="KW-0129">CBS domain</keyword>
<keyword id="KW-1003">Cell membrane</keyword>
<keyword id="KW-0868">Chloride</keyword>
<keyword id="KW-0869">Chloride channel</keyword>
<keyword id="KW-0407">Ion channel</keyword>
<keyword id="KW-0406">Ion transport</keyword>
<keyword id="KW-0472">Membrane</keyword>
<keyword id="KW-0479">Metal-binding</keyword>
<keyword id="KW-1185">Reference proteome</keyword>
<keyword id="KW-0677">Repeat</keyword>
<keyword id="KW-0812">Transmembrane</keyword>
<keyword id="KW-1133">Transmembrane helix</keyword>
<keyword id="KW-0813">Transport</keyword>
<keyword id="KW-0851">Voltage-gated channel</keyword>
<name>CLCKB_MOUSE</name>
<evidence type="ECO:0000250" key="1"/>
<evidence type="ECO:0000250" key="2">
    <source>
        <dbReference type="UniProtKB" id="P35523"/>
    </source>
</evidence>
<evidence type="ECO:0000250" key="3">
    <source>
        <dbReference type="UniProtKB" id="P37019"/>
    </source>
</evidence>
<evidence type="ECO:0000250" key="4">
    <source>
        <dbReference type="UniProtKB" id="P51800"/>
    </source>
</evidence>
<evidence type="ECO:0000250" key="5">
    <source>
        <dbReference type="UniProtKB" id="P51801"/>
    </source>
</evidence>
<evidence type="ECO:0000255" key="6"/>
<evidence type="ECO:0000255" key="7">
    <source>
        <dbReference type="PROSITE-ProRule" id="PRU00703"/>
    </source>
</evidence>
<evidence type="ECO:0000269" key="8">
    <source>
    </source>
</evidence>
<evidence type="ECO:0000269" key="9">
    <source>
    </source>
</evidence>
<evidence type="ECO:0000269" key="10">
    <source>
    </source>
</evidence>
<evidence type="ECO:0000269" key="11">
    <source>
    </source>
</evidence>
<evidence type="ECO:0000269" key="12">
    <source>
    </source>
</evidence>
<evidence type="ECO:0000303" key="13">
    <source>
    </source>
</evidence>
<evidence type="ECO:0000303" key="14">
    <source>
    </source>
</evidence>
<evidence type="ECO:0000305" key="15"/>
<evidence type="ECO:0000305" key="16">
    <source>
    </source>
</evidence>
<evidence type="ECO:0000312" key="17">
    <source>
        <dbReference type="MGI" id="MGI:1930643"/>
    </source>
</evidence>
<organism>
    <name type="scientific">Mus musculus</name>
    <name type="common">Mouse</name>
    <dbReference type="NCBI Taxonomy" id="10090"/>
    <lineage>
        <taxon>Eukaryota</taxon>
        <taxon>Metazoa</taxon>
        <taxon>Chordata</taxon>
        <taxon>Craniata</taxon>
        <taxon>Vertebrata</taxon>
        <taxon>Euteleostomi</taxon>
        <taxon>Mammalia</taxon>
        <taxon>Eutheria</taxon>
        <taxon>Euarchontoglires</taxon>
        <taxon>Glires</taxon>
        <taxon>Rodentia</taxon>
        <taxon>Myomorpha</taxon>
        <taxon>Muroidea</taxon>
        <taxon>Muridae</taxon>
        <taxon>Murinae</taxon>
        <taxon>Mus</taxon>
        <taxon>Mus</taxon>
    </lineage>
</organism>
<gene>
    <name evidence="17" type="primary">Clcnkb</name>
    <name type="synonym">Clckb</name>
    <name type="synonym">Clcnk1l</name>
</gene>